<feature type="chain" id="PRO_0000116435" description="Uncharacterized protein C24B11.14">
    <location>
        <begin position="1"/>
        <end position="166"/>
    </location>
</feature>
<gene>
    <name type="ORF">SPAC24B11.14</name>
    <name type="ORF">SPAC806.10</name>
</gene>
<reference key="1">
    <citation type="journal article" date="2002" name="Nature">
        <title>The genome sequence of Schizosaccharomyces pombe.</title>
        <authorList>
            <person name="Wood V."/>
            <person name="Gwilliam R."/>
            <person name="Rajandream M.A."/>
            <person name="Lyne M.H."/>
            <person name="Lyne R."/>
            <person name="Stewart A."/>
            <person name="Sgouros J.G."/>
            <person name="Peat N."/>
            <person name="Hayles J."/>
            <person name="Baker S.G."/>
            <person name="Basham D."/>
            <person name="Bowman S."/>
            <person name="Brooks K."/>
            <person name="Brown D."/>
            <person name="Brown S."/>
            <person name="Chillingworth T."/>
            <person name="Churcher C.M."/>
            <person name="Collins M."/>
            <person name="Connor R."/>
            <person name="Cronin A."/>
            <person name="Davis P."/>
            <person name="Feltwell T."/>
            <person name="Fraser A."/>
            <person name="Gentles S."/>
            <person name="Goble A."/>
            <person name="Hamlin N."/>
            <person name="Harris D.E."/>
            <person name="Hidalgo J."/>
            <person name="Hodgson G."/>
            <person name="Holroyd S."/>
            <person name="Hornsby T."/>
            <person name="Howarth S."/>
            <person name="Huckle E.J."/>
            <person name="Hunt S."/>
            <person name="Jagels K."/>
            <person name="James K.D."/>
            <person name="Jones L."/>
            <person name="Jones M."/>
            <person name="Leather S."/>
            <person name="McDonald S."/>
            <person name="McLean J."/>
            <person name="Mooney P."/>
            <person name="Moule S."/>
            <person name="Mungall K.L."/>
            <person name="Murphy L.D."/>
            <person name="Niblett D."/>
            <person name="Odell C."/>
            <person name="Oliver K."/>
            <person name="O'Neil S."/>
            <person name="Pearson D."/>
            <person name="Quail M.A."/>
            <person name="Rabbinowitsch E."/>
            <person name="Rutherford K.M."/>
            <person name="Rutter S."/>
            <person name="Saunders D."/>
            <person name="Seeger K."/>
            <person name="Sharp S."/>
            <person name="Skelton J."/>
            <person name="Simmonds M.N."/>
            <person name="Squares R."/>
            <person name="Squares S."/>
            <person name="Stevens K."/>
            <person name="Taylor K."/>
            <person name="Taylor R.G."/>
            <person name="Tivey A."/>
            <person name="Walsh S.V."/>
            <person name="Warren T."/>
            <person name="Whitehead S."/>
            <person name="Woodward J.R."/>
            <person name="Volckaert G."/>
            <person name="Aert R."/>
            <person name="Robben J."/>
            <person name="Grymonprez B."/>
            <person name="Weltjens I."/>
            <person name="Vanstreels E."/>
            <person name="Rieger M."/>
            <person name="Schaefer M."/>
            <person name="Mueller-Auer S."/>
            <person name="Gabel C."/>
            <person name="Fuchs M."/>
            <person name="Duesterhoeft A."/>
            <person name="Fritzc C."/>
            <person name="Holzer E."/>
            <person name="Moestl D."/>
            <person name="Hilbert H."/>
            <person name="Borzym K."/>
            <person name="Langer I."/>
            <person name="Beck A."/>
            <person name="Lehrach H."/>
            <person name="Reinhardt R."/>
            <person name="Pohl T.M."/>
            <person name="Eger P."/>
            <person name="Zimmermann W."/>
            <person name="Wedler H."/>
            <person name="Wambutt R."/>
            <person name="Purnelle B."/>
            <person name="Goffeau A."/>
            <person name="Cadieu E."/>
            <person name="Dreano S."/>
            <person name="Gloux S."/>
            <person name="Lelaure V."/>
            <person name="Mottier S."/>
            <person name="Galibert F."/>
            <person name="Aves S.J."/>
            <person name="Xiang Z."/>
            <person name="Hunt C."/>
            <person name="Moore K."/>
            <person name="Hurst S.M."/>
            <person name="Lucas M."/>
            <person name="Rochet M."/>
            <person name="Gaillardin C."/>
            <person name="Tallada V.A."/>
            <person name="Garzon A."/>
            <person name="Thode G."/>
            <person name="Daga R.R."/>
            <person name="Cruzado L."/>
            <person name="Jimenez J."/>
            <person name="Sanchez M."/>
            <person name="del Rey F."/>
            <person name="Benito J."/>
            <person name="Dominguez A."/>
            <person name="Revuelta J.L."/>
            <person name="Moreno S."/>
            <person name="Armstrong J."/>
            <person name="Forsburg S.L."/>
            <person name="Cerutti L."/>
            <person name="Lowe T."/>
            <person name="McCombie W.R."/>
            <person name="Paulsen I."/>
            <person name="Potashkin J."/>
            <person name="Shpakovski G.V."/>
            <person name="Ussery D."/>
            <person name="Barrell B.G."/>
            <person name="Nurse P."/>
        </authorList>
    </citation>
    <scope>NUCLEOTIDE SEQUENCE [LARGE SCALE GENOMIC DNA]</scope>
    <source>
        <strain>972 / ATCC 24843</strain>
    </source>
</reference>
<organism>
    <name type="scientific">Schizosaccharomyces pombe (strain 972 / ATCC 24843)</name>
    <name type="common">Fission yeast</name>
    <dbReference type="NCBI Taxonomy" id="284812"/>
    <lineage>
        <taxon>Eukaryota</taxon>
        <taxon>Fungi</taxon>
        <taxon>Dikarya</taxon>
        <taxon>Ascomycota</taxon>
        <taxon>Taphrinomycotina</taxon>
        <taxon>Schizosaccharomycetes</taxon>
        <taxon>Schizosaccharomycetales</taxon>
        <taxon>Schizosaccharomycetaceae</taxon>
        <taxon>Schizosaccharomyces</taxon>
    </lineage>
</organism>
<keyword id="KW-1185">Reference proteome</keyword>
<proteinExistence type="predicted"/>
<accession>Q9UR21</accession>
<sequence length="166" mass="19504">MFAYNHKTLHVCLRLISLRNCSNTWTFVPYANSNRGLNINQQLKLFNRRSKIALSSFIIPTSVDILVKVAGFQRYIVNVEFSNVQSYFRYYNYISLYFVTHSKVPLNRLPNSMIPYTVFAHFDIVPYTTYSILTKYRCAQDKEREIVGLINASQSKLRYKFCGLRN</sequence>
<name>YAIE_SCHPO</name>
<protein>
    <recommendedName>
        <fullName>Uncharacterized protein C24B11.14</fullName>
    </recommendedName>
</protein>
<dbReference type="EMBL" id="CU329670">
    <property type="protein sequence ID" value="CAB61651.1"/>
    <property type="molecule type" value="Genomic_DNA"/>
</dbReference>
<dbReference type="PIR" id="T38340">
    <property type="entry name" value="T38340"/>
</dbReference>
<dbReference type="RefSeq" id="XP_001713035.1">
    <property type="nucleotide sequence ID" value="XM_001712983.1"/>
</dbReference>
<dbReference type="SMR" id="Q9UR21"/>
<dbReference type="BioGRID" id="278028">
    <property type="interactions" value="4"/>
</dbReference>
<dbReference type="PaxDb" id="4896-SPAC24B11.14.1"/>
<dbReference type="EnsemblFungi" id="SPAC24B11.14.1">
    <property type="protein sequence ID" value="SPAC24B11.14.1:pep"/>
    <property type="gene ID" value="SPAC24B11.14"/>
</dbReference>
<dbReference type="PomBase" id="SPAC24B11.14"/>
<dbReference type="VEuPathDB" id="FungiDB:SPAC24B11.14"/>
<dbReference type="HOGENOM" id="CLU_1603689_0_0_1"/>
<dbReference type="InParanoid" id="Q9UR21"/>
<dbReference type="PRO" id="PR:Q9UR21"/>
<dbReference type="Proteomes" id="UP000002485">
    <property type="component" value="Chromosome I"/>
</dbReference>